<proteinExistence type="inferred from homology"/>
<dbReference type="EC" id="4.2.1.17" evidence="1"/>
<dbReference type="EC" id="5.1.2.3" evidence="1"/>
<dbReference type="EC" id="5.3.3.8" evidence="1"/>
<dbReference type="EC" id="1.1.1.35" evidence="1"/>
<dbReference type="EMBL" id="CP000472">
    <property type="protein sequence ID" value="ACJ26883.1"/>
    <property type="molecule type" value="Genomic_DNA"/>
</dbReference>
<dbReference type="RefSeq" id="WP_020910267.1">
    <property type="nucleotide sequence ID" value="NC_011566.1"/>
</dbReference>
<dbReference type="SMR" id="B8CH91"/>
<dbReference type="STRING" id="225849.swp_0035"/>
<dbReference type="KEGG" id="swp:swp_0035"/>
<dbReference type="eggNOG" id="COG1024">
    <property type="taxonomic scope" value="Bacteria"/>
</dbReference>
<dbReference type="eggNOG" id="COG1250">
    <property type="taxonomic scope" value="Bacteria"/>
</dbReference>
<dbReference type="HOGENOM" id="CLU_009834_16_3_6"/>
<dbReference type="OrthoDB" id="5389341at2"/>
<dbReference type="UniPathway" id="UPA00659"/>
<dbReference type="Proteomes" id="UP000000753">
    <property type="component" value="Chromosome"/>
</dbReference>
<dbReference type="GO" id="GO:0036125">
    <property type="term" value="C:fatty acid beta-oxidation multienzyme complex"/>
    <property type="evidence" value="ECO:0007669"/>
    <property type="project" value="InterPro"/>
</dbReference>
<dbReference type="GO" id="GO:0008692">
    <property type="term" value="F:3-hydroxybutyryl-CoA epimerase activity"/>
    <property type="evidence" value="ECO:0007669"/>
    <property type="project" value="UniProtKB-UniRule"/>
</dbReference>
<dbReference type="GO" id="GO:0004165">
    <property type="term" value="F:delta(3)-delta(2)-enoyl-CoA isomerase activity"/>
    <property type="evidence" value="ECO:0007669"/>
    <property type="project" value="UniProtKB-UniRule"/>
</dbReference>
<dbReference type="GO" id="GO:0004300">
    <property type="term" value="F:enoyl-CoA hydratase activity"/>
    <property type="evidence" value="ECO:0007669"/>
    <property type="project" value="UniProtKB-UniRule"/>
</dbReference>
<dbReference type="GO" id="GO:0016509">
    <property type="term" value="F:long-chain-3-hydroxyacyl-CoA dehydrogenase activity"/>
    <property type="evidence" value="ECO:0007669"/>
    <property type="project" value="TreeGrafter"/>
</dbReference>
<dbReference type="GO" id="GO:0070403">
    <property type="term" value="F:NAD+ binding"/>
    <property type="evidence" value="ECO:0007669"/>
    <property type="project" value="InterPro"/>
</dbReference>
<dbReference type="GO" id="GO:0006635">
    <property type="term" value="P:fatty acid beta-oxidation"/>
    <property type="evidence" value="ECO:0007669"/>
    <property type="project" value="UniProtKB-UniRule"/>
</dbReference>
<dbReference type="CDD" id="cd06558">
    <property type="entry name" value="crotonase-like"/>
    <property type="match status" value="1"/>
</dbReference>
<dbReference type="FunFam" id="1.10.1040.50:FF:000001">
    <property type="entry name" value="Fatty acid oxidation complex subunit alpha"/>
    <property type="match status" value="1"/>
</dbReference>
<dbReference type="FunFam" id="3.40.50.720:FF:000009">
    <property type="entry name" value="Fatty oxidation complex, alpha subunit"/>
    <property type="match status" value="1"/>
</dbReference>
<dbReference type="Gene3D" id="1.10.1040.50">
    <property type="match status" value="1"/>
</dbReference>
<dbReference type="Gene3D" id="3.90.226.10">
    <property type="entry name" value="2-enoyl-CoA Hydratase, Chain A, domain 1"/>
    <property type="match status" value="1"/>
</dbReference>
<dbReference type="Gene3D" id="3.40.50.720">
    <property type="entry name" value="NAD(P)-binding Rossmann-like Domain"/>
    <property type="match status" value="1"/>
</dbReference>
<dbReference type="HAMAP" id="MF_01621">
    <property type="entry name" value="FadB"/>
    <property type="match status" value="1"/>
</dbReference>
<dbReference type="InterPro" id="IPR006180">
    <property type="entry name" value="3-OHacyl-CoA_DH_CS"/>
</dbReference>
<dbReference type="InterPro" id="IPR006176">
    <property type="entry name" value="3-OHacyl-CoA_DH_NAD-bd"/>
</dbReference>
<dbReference type="InterPro" id="IPR006108">
    <property type="entry name" value="3HC_DH_C"/>
</dbReference>
<dbReference type="InterPro" id="IPR008927">
    <property type="entry name" value="6-PGluconate_DH-like_C_sf"/>
</dbReference>
<dbReference type="InterPro" id="IPR029045">
    <property type="entry name" value="ClpP/crotonase-like_dom_sf"/>
</dbReference>
<dbReference type="InterPro" id="IPR018376">
    <property type="entry name" value="Enoyl-CoA_hyd/isom_CS"/>
</dbReference>
<dbReference type="InterPro" id="IPR001753">
    <property type="entry name" value="Enoyl-CoA_hydra/iso"/>
</dbReference>
<dbReference type="InterPro" id="IPR050136">
    <property type="entry name" value="FA_oxidation_alpha_subunit"/>
</dbReference>
<dbReference type="InterPro" id="IPR012799">
    <property type="entry name" value="FadB"/>
</dbReference>
<dbReference type="InterPro" id="IPR036291">
    <property type="entry name" value="NAD(P)-bd_dom_sf"/>
</dbReference>
<dbReference type="NCBIfam" id="TIGR02437">
    <property type="entry name" value="FadB"/>
    <property type="match status" value="1"/>
</dbReference>
<dbReference type="NCBIfam" id="NF008727">
    <property type="entry name" value="PRK11730.1"/>
    <property type="match status" value="1"/>
</dbReference>
<dbReference type="PANTHER" id="PTHR43612">
    <property type="entry name" value="TRIFUNCTIONAL ENZYME SUBUNIT ALPHA"/>
    <property type="match status" value="1"/>
</dbReference>
<dbReference type="PANTHER" id="PTHR43612:SF3">
    <property type="entry name" value="TRIFUNCTIONAL ENZYME SUBUNIT ALPHA, MITOCHONDRIAL"/>
    <property type="match status" value="1"/>
</dbReference>
<dbReference type="Pfam" id="PF00725">
    <property type="entry name" value="3HCDH"/>
    <property type="match status" value="1"/>
</dbReference>
<dbReference type="Pfam" id="PF02737">
    <property type="entry name" value="3HCDH_N"/>
    <property type="match status" value="1"/>
</dbReference>
<dbReference type="Pfam" id="PF00378">
    <property type="entry name" value="ECH_1"/>
    <property type="match status" value="1"/>
</dbReference>
<dbReference type="SUPFAM" id="SSF48179">
    <property type="entry name" value="6-phosphogluconate dehydrogenase C-terminal domain-like"/>
    <property type="match status" value="2"/>
</dbReference>
<dbReference type="SUPFAM" id="SSF52096">
    <property type="entry name" value="ClpP/crotonase"/>
    <property type="match status" value="1"/>
</dbReference>
<dbReference type="SUPFAM" id="SSF51735">
    <property type="entry name" value="NAD(P)-binding Rossmann-fold domains"/>
    <property type="match status" value="1"/>
</dbReference>
<dbReference type="PROSITE" id="PS00067">
    <property type="entry name" value="3HCDH"/>
    <property type="match status" value="1"/>
</dbReference>
<dbReference type="PROSITE" id="PS00166">
    <property type="entry name" value="ENOYL_COA_HYDRATASE"/>
    <property type="match status" value="1"/>
</dbReference>
<organism>
    <name type="scientific">Shewanella piezotolerans (strain WP3 / JCM 13877)</name>
    <dbReference type="NCBI Taxonomy" id="225849"/>
    <lineage>
        <taxon>Bacteria</taxon>
        <taxon>Pseudomonadati</taxon>
        <taxon>Pseudomonadota</taxon>
        <taxon>Gammaproteobacteria</taxon>
        <taxon>Alteromonadales</taxon>
        <taxon>Shewanellaceae</taxon>
        <taxon>Shewanella</taxon>
    </lineage>
</organism>
<gene>
    <name evidence="1" type="primary">fadB</name>
    <name type="ordered locus">swp_0035</name>
</gene>
<accession>B8CH91</accession>
<keyword id="KW-0276">Fatty acid metabolism</keyword>
<keyword id="KW-0413">Isomerase</keyword>
<keyword id="KW-0442">Lipid degradation</keyword>
<keyword id="KW-0443">Lipid metabolism</keyword>
<keyword id="KW-0456">Lyase</keyword>
<keyword id="KW-0511">Multifunctional enzyme</keyword>
<keyword id="KW-0520">NAD</keyword>
<keyword id="KW-0560">Oxidoreductase</keyword>
<evidence type="ECO:0000255" key="1">
    <source>
        <dbReference type="HAMAP-Rule" id="MF_01621"/>
    </source>
</evidence>
<name>FADB_SHEPW</name>
<reference key="1">
    <citation type="journal article" date="2008" name="PLoS ONE">
        <title>Environmental adaptation: genomic analysis of the piezotolerant and psychrotolerant deep-sea iron reducing bacterium Shewanella piezotolerans WP3.</title>
        <authorList>
            <person name="Wang F."/>
            <person name="Wang J."/>
            <person name="Jian H."/>
            <person name="Zhang B."/>
            <person name="Li S."/>
            <person name="Wang F."/>
            <person name="Zeng X."/>
            <person name="Gao L."/>
            <person name="Bartlett D.H."/>
            <person name="Yu J."/>
            <person name="Hu S."/>
            <person name="Xiao X."/>
        </authorList>
    </citation>
    <scope>NUCLEOTIDE SEQUENCE [LARGE SCALE GENOMIC DNA]</scope>
    <source>
        <strain>WP3 / JCM 13877</strain>
    </source>
</reference>
<sequence length="717" mass="77236">MIYQSPTIEVELLEDNIAHLCFNAQGSVNKFDRETIDSLNAALDSIKQNNSIKGLMLTSAKPAFIVGADITEFLGLFAEEDAVLLSWLEEANVVFNKLEDLPFPTISAINGFALGAGCETILATDFRVADTTARIGLPETKLGIIPGFGGTVRLPRVVGTDNALEWITSGKDQRPEAALNVGAIDALVAPEQLQSAALKMLKDAIAEKLDWQTRRAKKLAPLTLPKLEAMMSFATAKGMVFKVAGKHYPAPMAVVSVIEKAAQLDRAGALKVEHQAFLKLAKTEVAQSLIGIFLNDQLVKGKAKKAGKLAKKVNSAAVLGAGIMGGGIAYQSASKGTPIVMKDIAQPALDLGLGEASKLLAAQVKRGRSNPAKMAAVLNNITPALDYAPVKAADVVVEAVVEHPKVKSMVLAEVEEHVSEDAIITSNTSTISINLLAKSLKKPERFCGMHFFNPVHKMPLVEVIRGEHSSDETVASVVAYASKMGKTPIVVNDCPGFFVNRVLFPYFAGFSGLLADGADFAAIDKVMEKQFGWPMGPAYLLDVVGLDTGHHAQAVMAEGFPERMGKTGKDAIDVMFEAERFGQKNNKGFYQYSVDRRGKPKKDLDPTSYELLQGEFGERKAFESDEIIARTMIPMIIETVRCLEEGIIASPAEADMGLVYGLGFPPFRGGVFRYLDTMGVANFVALADKYAHLGGLYQVTDAMRELAANNGSYYQQA</sequence>
<protein>
    <recommendedName>
        <fullName evidence="1">Fatty acid oxidation complex subunit alpha</fullName>
    </recommendedName>
    <domain>
        <recommendedName>
            <fullName evidence="1">Enoyl-CoA hydratase/Delta(3)-cis-Delta(2)-trans-enoyl-CoA isomerase/3-hydroxybutyryl-CoA epimerase</fullName>
            <ecNumber evidence="1">4.2.1.17</ecNumber>
            <ecNumber evidence="1">5.1.2.3</ecNumber>
            <ecNumber evidence="1">5.3.3.8</ecNumber>
        </recommendedName>
    </domain>
    <domain>
        <recommendedName>
            <fullName evidence="1">3-hydroxyacyl-CoA dehydrogenase</fullName>
            <ecNumber evidence="1">1.1.1.35</ecNumber>
        </recommendedName>
    </domain>
</protein>
<feature type="chain" id="PRO_1000186054" description="Fatty acid oxidation complex subunit alpha">
    <location>
        <begin position="1"/>
        <end position="717"/>
    </location>
</feature>
<feature type="region of interest" description="Enoyl-CoA hydratase/isomerase" evidence="1">
    <location>
        <begin position="1"/>
        <end position="189"/>
    </location>
</feature>
<feature type="region of interest" description="3-hydroxyacyl-CoA dehydrogenase" evidence="1">
    <location>
        <begin position="311"/>
        <end position="717"/>
    </location>
</feature>
<feature type="active site" description="For 3-hydroxyacyl-CoA dehydrogenase activity" evidence="1">
    <location>
        <position position="450"/>
    </location>
</feature>
<feature type="binding site" evidence="1">
    <location>
        <position position="296"/>
    </location>
    <ligand>
        <name>substrate</name>
    </ligand>
</feature>
<feature type="binding site" evidence="1">
    <location>
        <position position="324"/>
    </location>
    <ligand>
        <name>NAD(+)</name>
        <dbReference type="ChEBI" id="CHEBI:57540"/>
    </ligand>
</feature>
<feature type="binding site" evidence="1">
    <location>
        <position position="343"/>
    </location>
    <ligand>
        <name>NAD(+)</name>
        <dbReference type="ChEBI" id="CHEBI:57540"/>
    </ligand>
</feature>
<feature type="binding site" evidence="1">
    <location>
        <begin position="400"/>
        <end position="402"/>
    </location>
    <ligand>
        <name>NAD(+)</name>
        <dbReference type="ChEBI" id="CHEBI:57540"/>
    </ligand>
</feature>
<feature type="binding site" evidence="1">
    <location>
        <position position="407"/>
    </location>
    <ligand>
        <name>NAD(+)</name>
        <dbReference type="ChEBI" id="CHEBI:57540"/>
    </ligand>
</feature>
<feature type="binding site" evidence="1">
    <location>
        <position position="429"/>
    </location>
    <ligand>
        <name>NAD(+)</name>
        <dbReference type="ChEBI" id="CHEBI:57540"/>
    </ligand>
</feature>
<feature type="binding site" evidence="1">
    <location>
        <position position="453"/>
    </location>
    <ligand>
        <name>NAD(+)</name>
        <dbReference type="ChEBI" id="CHEBI:57540"/>
    </ligand>
</feature>
<feature type="binding site" evidence="1">
    <location>
        <position position="500"/>
    </location>
    <ligand>
        <name>substrate</name>
    </ligand>
</feature>
<feature type="binding site" evidence="1">
    <location>
        <position position="660"/>
    </location>
    <ligand>
        <name>substrate</name>
    </ligand>
</feature>
<feature type="site" description="Important for catalytic activity" evidence="1">
    <location>
        <position position="119"/>
    </location>
</feature>
<feature type="site" description="Important for catalytic activity" evidence="1">
    <location>
        <position position="139"/>
    </location>
</feature>
<comment type="function">
    <text evidence="1">Involved in the aerobic and anaerobic degradation of long-chain fatty acids via beta-oxidation cycle. Catalyzes the formation of 3-oxoacyl-CoA from enoyl-CoA via L-3-hydroxyacyl-CoA. It can also use D-3-hydroxyacyl-CoA and cis-3-enoyl-CoA as substrate.</text>
</comment>
<comment type="catalytic activity">
    <reaction evidence="1">
        <text>a (3S)-3-hydroxyacyl-CoA + NAD(+) = a 3-oxoacyl-CoA + NADH + H(+)</text>
        <dbReference type="Rhea" id="RHEA:22432"/>
        <dbReference type="ChEBI" id="CHEBI:15378"/>
        <dbReference type="ChEBI" id="CHEBI:57318"/>
        <dbReference type="ChEBI" id="CHEBI:57540"/>
        <dbReference type="ChEBI" id="CHEBI:57945"/>
        <dbReference type="ChEBI" id="CHEBI:90726"/>
        <dbReference type="EC" id="1.1.1.35"/>
    </reaction>
</comment>
<comment type="catalytic activity">
    <reaction evidence="1">
        <text>a (3S)-3-hydroxyacyl-CoA = a (2E)-enoyl-CoA + H2O</text>
        <dbReference type="Rhea" id="RHEA:16105"/>
        <dbReference type="ChEBI" id="CHEBI:15377"/>
        <dbReference type="ChEBI" id="CHEBI:57318"/>
        <dbReference type="ChEBI" id="CHEBI:58856"/>
        <dbReference type="EC" id="4.2.1.17"/>
    </reaction>
</comment>
<comment type="catalytic activity">
    <reaction evidence="1">
        <text>a 4-saturated-(3S)-3-hydroxyacyl-CoA = a (3E)-enoyl-CoA + H2O</text>
        <dbReference type="Rhea" id="RHEA:20724"/>
        <dbReference type="ChEBI" id="CHEBI:15377"/>
        <dbReference type="ChEBI" id="CHEBI:58521"/>
        <dbReference type="ChEBI" id="CHEBI:137480"/>
        <dbReference type="EC" id="4.2.1.17"/>
    </reaction>
</comment>
<comment type="catalytic activity">
    <reaction evidence="1">
        <text>(3S)-3-hydroxybutanoyl-CoA = (3R)-3-hydroxybutanoyl-CoA</text>
        <dbReference type="Rhea" id="RHEA:21760"/>
        <dbReference type="ChEBI" id="CHEBI:57315"/>
        <dbReference type="ChEBI" id="CHEBI:57316"/>
        <dbReference type="EC" id="5.1.2.3"/>
    </reaction>
</comment>
<comment type="catalytic activity">
    <reaction evidence="1">
        <text>a (3Z)-enoyl-CoA = a 4-saturated (2E)-enoyl-CoA</text>
        <dbReference type="Rhea" id="RHEA:45900"/>
        <dbReference type="ChEBI" id="CHEBI:85097"/>
        <dbReference type="ChEBI" id="CHEBI:85489"/>
        <dbReference type="EC" id="5.3.3.8"/>
    </reaction>
</comment>
<comment type="catalytic activity">
    <reaction evidence="1">
        <text>a (3E)-enoyl-CoA = a 4-saturated (2E)-enoyl-CoA</text>
        <dbReference type="Rhea" id="RHEA:45228"/>
        <dbReference type="ChEBI" id="CHEBI:58521"/>
        <dbReference type="ChEBI" id="CHEBI:85097"/>
        <dbReference type="EC" id="5.3.3.8"/>
    </reaction>
</comment>
<comment type="pathway">
    <text evidence="1">Lipid metabolism; fatty acid beta-oxidation.</text>
</comment>
<comment type="subunit">
    <text evidence="1">Heterotetramer of two alpha chains (FadB) and two beta chains (FadA).</text>
</comment>
<comment type="similarity">
    <text evidence="1">In the N-terminal section; belongs to the enoyl-CoA hydratase/isomerase family.</text>
</comment>
<comment type="similarity">
    <text evidence="1">In the C-terminal section; belongs to the 3-hydroxyacyl-CoA dehydrogenase family.</text>
</comment>